<organism>
    <name type="scientific">Neurospora crassa (strain ATCC 24698 / 74-OR23-1A / CBS 708.71 / DSM 1257 / FGSC 987)</name>
    <dbReference type="NCBI Taxonomy" id="367110"/>
    <lineage>
        <taxon>Eukaryota</taxon>
        <taxon>Fungi</taxon>
        <taxon>Dikarya</taxon>
        <taxon>Ascomycota</taxon>
        <taxon>Pezizomycotina</taxon>
        <taxon>Sordariomycetes</taxon>
        <taxon>Sordariomycetidae</taxon>
        <taxon>Sordariales</taxon>
        <taxon>Sordariaceae</taxon>
        <taxon>Neurospora</taxon>
    </lineage>
</organism>
<proteinExistence type="inferred from homology"/>
<sequence>MSSFQSTAAVRACARRAASTTSAATLASTTCRAAASRIQLQGQRSAGLVPKSWTRFSSSSIANDNQQKMLASHLQTADPVMYDIIEKEKQRQKQFINLIPSENFTSQAVLDALGSPMQNKYSEGYPGARYYGGNEFIDASERLCQDRALETFGLDPKEWGVNVQALSGAPANLYVYSALMDTHDRLMGLDLPHGGHLSHGYQTPTKKISFISKYFETLPYRLDEKTGYIDYNKLEELAITYRPKIIVAGASAYSRLIDYARLREICDKVNAYLMADMAHISGLVAAKVMPGPFTHADIVTTTSHKSLRGPRGAMIFFRRGVRRTNKKGEEELYNLETPINASVFPGHQGGPHNHTIAALAVALKQAQTPEFRAYQSQVLANATALAARLGEPKDKNGLGYTIVSGGTDNHLVLIDLKPQGIDGSRVERVLELVGVAANKNTVPGDKSALTPGGLRIGTPAMTTRGFTEEDFARVADIIDRAVTIAVRINKAAKEDAVKKGNEKAANRVKTFMDYLGNGETDPEIVQLRSEVESWVGTYPCPWDQSS</sequence>
<keyword id="KW-0496">Mitochondrion</keyword>
<keyword id="KW-0554">One-carbon metabolism</keyword>
<keyword id="KW-0663">Pyridoxal phosphate</keyword>
<keyword id="KW-1185">Reference proteome</keyword>
<keyword id="KW-0808">Transferase</keyword>
<keyword id="KW-0809">Transit peptide</keyword>
<gene>
    <name type="primary">cbs-2</name>
    <name type="ORF">NCU05805</name>
</gene>
<reference key="1">
    <citation type="journal article" date="2003" name="Nature">
        <title>The genome sequence of the filamentous fungus Neurospora crassa.</title>
        <authorList>
            <person name="Galagan J.E."/>
            <person name="Calvo S.E."/>
            <person name="Borkovich K.A."/>
            <person name="Selker E.U."/>
            <person name="Read N.D."/>
            <person name="Jaffe D.B."/>
            <person name="FitzHugh W."/>
            <person name="Ma L.-J."/>
            <person name="Smirnov S."/>
            <person name="Purcell S."/>
            <person name="Rehman B."/>
            <person name="Elkins T."/>
            <person name="Engels R."/>
            <person name="Wang S."/>
            <person name="Nielsen C.B."/>
            <person name="Butler J."/>
            <person name="Endrizzi M."/>
            <person name="Qui D."/>
            <person name="Ianakiev P."/>
            <person name="Bell-Pedersen D."/>
            <person name="Nelson M.A."/>
            <person name="Werner-Washburne M."/>
            <person name="Selitrennikoff C.P."/>
            <person name="Kinsey J.A."/>
            <person name="Braun E.L."/>
            <person name="Zelter A."/>
            <person name="Schulte U."/>
            <person name="Kothe G.O."/>
            <person name="Jedd G."/>
            <person name="Mewes H.-W."/>
            <person name="Staben C."/>
            <person name="Marcotte E."/>
            <person name="Greenberg D."/>
            <person name="Roy A."/>
            <person name="Foley K."/>
            <person name="Naylor J."/>
            <person name="Stange-Thomann N."/>
            <person name="Barrett R."/>
            <person name="Gnerre S."/>
            <person name="Kamal M."/>
            <person name="Kamvysselis M."/>
            <person name="Mauceli E.W."/>
            <person name="Bielke C."/>
            <person name="Rudd S."/>
            <person name="Frishman D."/>
            <person name="Krystofova S."/>
            <person name="Rasmussen C."/>
            <person name="Metzenberg R.L."/>
            <person name="Perkins D.D."/>
            <person name="Kroken S."/>
            <person name="Cogoni C."/>
            <person name="Macino G."/>
            <person name="Catcheside D.E.A."/>
            <person name="Li W."/>
            <person name="Pratt R.J."/>
            <person name="Osmani S.A."/>
            <person name="DeSouza C.P.C."/>
            <person name="Glass N.L."/>
            <person name="Orbach M.J."/>
            <person name="Berglund J.A."/>
            <person name="Voelker R."/>
            <person name="Yarden O."/>
            <person name="Plamann M."/>
            <person name="Seiler S."/>
            <person name="Dunlap J.C."/>
            <person name="Radford A."/>
            <person name="Aramayo R."/>
            <person name="Natvig D.O."/>
            <person name="Alex L.A."/>
            <person name="Mannhaupt G."/>
            <person name="Ebbole D.J."/>
            <person name="Freitag M."/>
            <person name="Paulsen I."/>
            <person name="Sachs M.S."/>
            <person name="Lander E.S."/>
            <person name="Nusbaum C."/>
            <person name="Birren B.W."/>
        </authorList>
    </citation>
    <scope>NUCLEOTIDE SEQUENCE [LARGE SCALE GENOMIC DNA]</scope>
    <source>
        <strain>ATCC 24698 / 74-OR23-1A / CBS 708.71 / DSM 1257 / FGSC 987</strain>
    </source>
</reference>
<feature type="transit peptide" description="Mitochondrion" evidence="2">
    <location>
        <begin position="1"/>
        <end position="64"/>
    </location>
</feature>
<feature type="chain" id="PRO_0000032567" description="Putative serine hydroxymethyltransferase, mitochondrial">
    <location>
        <begin position="65"/>
        <end position="546"/>
    </location>
</feature>
<feature type="modified residue" description="N6-(pyridoxal phosphate)lysine" evidence="1">
    <location>
        <position position="305"/>
    </location>
</feature>
<dbReference type="EC" id="2.1.2.1"/>
<dbReference type="EMBL" id="CM002242">
    <property type="protein sequence ID" value="ESA42065.1"/>
    <property type="molecule type" value="Genomic_DNA"/>
</dbReference>
<dbReference type="EMBL" id="CM002242">
    <property type="protein sequence ID" value="ESA42066.1"/>
    <property type="molecule type" value="Genomic_DNA"/>
</dbReference>
<dbReference type="RefSeq" id="XP_011395205.1">
    <property type="nucleotide sequence ID" value="XM_011396903.1"/>
</dbReference>
<dbReference type="RefSeq" id="XP_011395206.1">
    <property type="nucleotide sequence ID" value="XM_011396904.1"/>
</dbReference>
<dbReference type="SMR" id="Q7S5N8"/>
<dbReference type="FunCoup" id="Q7S5N8">
    <property type="interactions" value="420"/>
</dbReference>
<dbReference type="STRING" id="367110.Q7S5N8"/>
<dbReference type="PaxDb" id="5141-EFNCRP00000005770"/>
<dbReference type="EnsemblFungi" id="ESA42065">
    <property type="protein sequence ID" value="ESA42065"/>
    <property type="gene ID" value="NCU05805"/>
</dbReference>
<dbReference type="EnsemblFungi" id="ESA42066">
    <property type="protein sequence ID" value="ESA42066"/>
    <property type="gene ID" value="NCU05805"/>
</dbReference>
<dbReference type="GeneID" id="3876196"/>
<dbReference type="KEGG" id="ncr:NCU05805"/>
<dbReference type="VEuPathDB" id="FungiDB:NCU05805"/>
<dbReference type="HOGENOM" id="CLU_022477_0_1_1"/>
<dbReference type="InParanoid" id="Q7S5N8"/>
<dbReference type="OrthoDB" id="10265628at2759"/>
<dbReference type="UniPathway" id="UPA00193"/>
<dbReference type="Proteomes" id="UP000001805">
    <property type="component" value="Chromosome 7, Linkage Group VII"/>
</dbReference>
<dbReference type="GO" id="GO:0005737">
    <property type="term" value="C:cytoplasm"/>
    <property type="evidence" value="ECO:0000318"/>
    <property type="project" value="GO_Central"/>
</dbReference>
<dbReference type="GO" id="GO:0005739">
    <property type="term" value="C:mitochondrion"/>
    <property type="evidence" value="ECO:0000318"/>
    <property type="project" value="GO_Central"/>
</dbReference>
<dbReference type="GO" id="GO:0004372">
    <property type="term" value="F:glycine hydroxymethyltransferase activity"/>
    <property type="evidence" value="ECO:0000318"/>
    <property type="project" value="GO_Central"/>
</dbReference>
<dbReference type="GO" id="GO:0030170">
    <property type="term" value="F:pyridoxal phosphate binding"/>
    <property type="evidence" value="ECO:0000318"/>
    <property type="project" value="GO_Central"/>
</dbReference>
<dbReference type="GO" id="GO:0019264">
    <property type="term" value="P:glycine biosynthetic process from serine"/>
    <property type="evidence" value="ECO:0000318"/>
    <property type="project" value="GO_Central"/>
</dbReference>
<dbReference type="GO" id="GO:0035999">
    <property type="term" value="P:tetrahydrofolate interconversion"/>
    <property type="evidence" value="ECO:0007669"/>
    <property type="project" value="UniProtKB-UniPathway"/>
</dbReference>
<dbReference type="GO" id="GO:0046653">
    <property type="term" value="P:tetrahydrofolate metabolic process"/>
    <property type="evidence" value="ECO:0000318"/>
    <property type="project" value="GO_Central"/>
</dbReference>
<dbReference type="CDD" id="cd00378">
    <property type="entry name" value="SHMT"/>
    <property type="match status" value="1"/>
</dbReference>
<dbReference type="FunFam" id="3.40.640.10:FF:000097">
    <property type="entry name" value="Serine hydroxymethyltransferase"/>
    <property type="match status" value="1"/>
</dbReference>
<dbReference type="Gene3D" id="3.90.1150.10">
    <property type="entry name" value="Aspartate Aminotransferase, domain 1"/>
    <property type="match status" value="1"/>
</dbReference>
<dbReference type="Gene3D" id="3.40.640.10">
    <property type="entry name" value="Type I PLP-dependent aspartate aminotransferase-like (Major domain)"/>
    <property type="match status" value="1"/>
</dbReference>
<dbReference type="HAMAP" id="MF_00051">
    <property type="entry name" value="SHMT"/>
    <property type="match status" value="1"/>
</dbReference>
<dbReference type="InterPro" id="IPR015424">
    <property type="entry name" value="PyrdxlP-dep_Trfase"/>
</dbReference>
<dbReference type="InterPro" id="IPR015421">
    <property type="entry name" value="PyrdxlP-dep_Trfase_major"/>
</dbReference>
<dbReference type="InterPro" id="IPR015422">
    <property type="entry name" value="PyrdxlP-dep_Trfase_small"/>
</dbReference>
<dbReference type="InterPro" id="IPR001085">
    <property type="entry name" value="Ser_HO-MeTrfase"/>
</dbReference>
<dbReference type="InterPro" id="IPR049943">
    <property type="entry name" value="Ser_HO-MeTrfase-like"/>
</dbReference>
<dbReference type="InterPro" id="IPR019798">
    <property type="entry name" value="Ser_HO-MeTrfase_PLP_BS"/>
</dbReference>
<dbReference type="InterPro" id="IPR039429">
    <property type="entry name" value="SHMT-like_dom"/>
</dbReference>
<dbReference type="NCBIfam" id="NF000586">
    <property type="entry name" value="PRK00011.1"/>
    <property type="match status" value="1"/>
</dbReference>
<dbReference type="PANTHER" id="PTHR11680">
    <property type="entry name" value="SERINE HYDROXYMETHYLTRANSFERASE"/>
    <property type="match status" value="1"/>
</dbReference>
<dbReference type="PANTHER" id="PTHR11680:SF57">
    <property type="entry name" value="SERINE HYDROXYMETHYLTRANSFERASE, MITOCHONDRIAL"/>
    <property type="match status" value="1"/>
</dbReference>
<dbReference type="Pfam" id="PF00464">
    <property type="entry name" value="SHMT"/>
    <property type="match status" value="1"/>
</dbReference>
<dbReference type="SUPFAM" id="SSF53383">
    <property type="entry name" value="PLP-dependent transferases"/>
    <property type="match status" value="1"/>
</dbReference>
<dbReference type="PROSITE" id="PS00096">
    <property type="entry name" value="SHMT"/>
    <property type="match status" value="1"/>
</dbReference>
<accession>Q7S5N8</accession>
<accession>V5IL73</accession>
<comment type="function">
    <text>Interconversion of serine and glycine.</text>
</comment>
<comment type="catalytic activity">
    <reaction>
        <text>(6R)-5,10-methylene-5,6,7,8-tetrahydrofolate + glycine + H2O = (6S)-5,6,7,8-tetrahydrofolate + L-serine</text>
        <dbReference type="Rhea" id="RHEA:15481"/>
        <dbReference type="ChEBI" id="CHEBI:15377"/>
        <dbReference type="ChEBI" id="CHEBI:15636"/>
        <dbReference type="ChEBI" id="CHEBI:33384"/>
        <dbReference type="ChEBI" id="CHEBI:57305"/>
        <dbReference type="ChEBI" id="CHEBI:57453"/>
        <dbReference type="EC" id="2.1.2.1"/>
    </reaction>
</comment>
<comment type="cofactor">
    <cofactor evidence="1">
        <name>pyridoxal 5'-phosphate</name>
        <dbReference type="ChEBI" id="CHEBI:597326"/>
    </cofactor>
</comment>
<comment type="pathway">
    <text>One-carbon metabolism; tetrahydrofolate interconversion.</text>
</comment>
<comment type="subunit">
    <text evidence="1">Homotetramer.</text>
</comment>
<comment type="subcellular location">
    <subcellularLocation>
        <location>Mitochondrion</location>
    </subcellularLocation>
</comment>
<comment type="miscellaneous">
    <text>In eukaryotes there are two forms of the enzymes: a cytosolic one and a mitochondrial one.</text>
</comment>
<comment type="similarity">
    <text evidence="3">Belongs to the SHMT family.</text>
</comment>
<protein>
    <recommendedName>
        <fullName>Putative serine hydroxymethyltransferase, mitochondrial</fullName>
        <shortName>SHMT</shortName>
        <ecNumber>2.1.2.1</ecNumber>
    </recommendedName>
    <alternativeName>
        <fullName>Carnitine biosynthesis protein 2</fullName>
    </alternativeName>
    <alternativeName>
        <fullName>Glycine hydroxymethyltransferase</fullName>
    </alternativeName>
    <alternativeName>
        <fullName>Serine methylase</fullName>
    </alternativeName>
</protein>
<evidence type="ECO:0000250" key="1"/>
<evidence type="ECO:0000255" key="2"/>
<evidence type="ECO:0000305" key="3"/>
<name>GLYM_NEUCR</name>